<proteinExistence type="inferred from homology"/>
<name>RRAA_VIBCH</name>
<accession>Q9KNQ9</accession>
<sequence length="171" mass="18445">MEYNTSALCDIYLDQVDVVEPMFSNFGGCASFAGQITTIKCYEDNGLIRETLEQDGLGRILLIDGGGSLRRALIDAELAALAEENEWEGIVVYGSVREVDELEEMSIGIQAIASIPVGATSQGIGEVDIPVNFGGVTFLPEDYLYADNTGIIISQEPLSADLGEEEEDELL</sequence>
<dbReference type="EMBL" id="AE003852">
    <property type="protein sequence ID" value="AAF95813.1"/>
    <property type="molecule type" value="Genomic_DNA"/>
</dbReference>
<dbReference type="PIR" id="B82049">
    <property type="entry name" value="B82049"/>
</dbReference>
<dbReference type="RefSeq" id="NP_232300.1">
    <property type="nucleotide sequence ID" value="NC_002505.1"/>
</dbReference>
<dbReference type="RefSeq" id="WP_000456236.1">
    <property type="nucleotide sequence ID" value="NZ_LT906614.1"/>
</dbReference>
<dbReference type="SMR" id="Q9KNQ9"/>
<dbReference type="STRING" id="243277.VC_2672"/>
<dbReference type="DNASU" id="2615500"/>
<dbReference type="EnsemblBacteria" id="AAF95813">
    <property type="protein sequence ID" value="AAF95813"/>
    <property type="gene ID" value="VC_2672"/>
</dbReference>
<dbReference type="GeneID" id="89513350"/>
<dbReference type="KEGG" id="vch:VC_2672"/>
<dbReference type="PATRIC" id="fig|243277.26.peg.2547"/>
<dbReference type="eggNOG" id="COG0684">
    <property type="taxonomic scope" value="Bacteria"/>
</dbReference>
<dbReference type="HOGENOM" id="CLU_072626_4_0_6"/>
<dbReference type="Proteomes" id="UP000000584">
    <property type="component" value="Chromosome 1"/>
</dbReference>
<dbReference type="GO" id="GO:0005737">
    <property type="term" value="C:cytoplasm"/>
    <property type="evidence" value="ECO:0007669"/>
    <property type="project" value="UniProtKB-SubCell"/>
</dbReference>
<dbReference type="GO" id="GO:0060698">
    <property type="term" value="F:endoribonuclease inhibitor activity"/>
    <property type="evidence" value="ECO:0007669"/>
    <property type="project" value="UniProtKB-UniRule"/>
</dbReference>
<dbReference type="GO" id="GO:0019899">
    <property type="term" value="F:enzyme binding"/>
    <property type="evidence" value="ECO:0007669"/>
    <property type="project" value="UniProtKB-UniRule"/>
</dbReference>
<dbReference type="GO" id="GO:0051252">
    <property type="term" value="P:regulation of RNA metabolic process"/>
    <property type="evidence" value="ECO:0007669"/>
    <property type="project" value="InterPro"/>
</dbReference>
<dbReference type="CDD" id="cd16841">
    <property type="entry name" value="RraA_family"/>
    <property type="match status" value="1"/>
</dbReference>
<dbReference type="Gene3D" id="3.50.30.40">
    <property type="entry name" value="Ribonuclease E inhibitor RraA/RraA-like"/>
    <property type="match status" value="1"/>
</dbReference>
<dbReference type="HAMAP" id="MF_00471">
    <property type="entry name" value="RraA"/>
    <property type="match status" value="1"/>
</dbReference>
<dbReference type="InterPro" id="IPR010203">
    <property type="entry name" value="RraA"/>
</dbReference>
<dbReference type="InterPro" id="IPR005493">
    <property type="entry name" value="RraA/RraA-like"/>
</dbReference>
<dbReference type="InterPro" id="IPR036704">
    <property type="entry name" value="RraA/RraA-like_sf"/>
</dbReference>
<dbReference type="InterPro" id="IPR014339">
    <property type="entry name" value="RraA_gpbac"/>
</dbReference>
<dbReference type="NCBIfam" id="TIGR01935">
    <property type="entry name" value="NOT-MenG"/>
    <property type="match status" value="1"/>
</dbReference>
<dbReference type="NCBIfam" id="NF006875">
    <property type="entry name" value="PRK09372.1"/>
    <property type="match status" value="1"/>
</dbReference>
<dbReference type="NCBIfam" id="TIGR02998">
    <property type="entry name" value="RraA_entero"/>
    <property type="match status" value="1"/>
</dbReference>
<dbReference type="PANTHER" id="PTHR33254">
    <property type="entry name" value="4-HYDROXY-4-METHYL-2-OXOGLUTARATE ALDOLASE 3-RELATED"/>
    <property type="match status" value="1"/>
</dbReference>
<dbReference type="PANTHER" id="PTHR33254:SF29">
    <property type="entry name" value="REGULATOR OF RIBONUCLEASE ACTIVITY A"/>
    <property type="match status" value="1"/>
</dbReference>
<dbReference type="Pfam" id="PF03737">
    <property type="entry name" value="RraA-like"/>
    <property type="match status" value="1"/>
</dbReference>
<dbReference type="SUPFAM" id="SSF89562">
    <property type="entry name" value="RraA-like"/>
    <property type="match status" value="1"/>
</dbReference>
<feature type="chain" id="PRO_0000209641" description="Regulator of ribonuclease activity A">
    <location>
        <begin position="1"/>
        <end position="171"/>
    </location>
</feature>
<keyword id="KW-0963">Cytoplasm</keyword>
<keyword id="KW-1185">Reference proteome</keyword>
<evidence type="ECO:0000255" key="1">
    <source>
        <dbReference type="HAMAP-Rule" id="MF_00471"/>
    </source>
</evidence>
<protein>
    <recommendedName>
        <fullName evidence="1">Regulator of ribonuclease activity A</fullName>
    </recommendedName>
</protein>
<comment type="function">
    <text evidence="1">Globally modulates RNA abundance by binding to RNase E (Rne) and regulating its endonucleolytic activity. Can modulate Rne action in a substrate-dependent manner by altering the composition of the degradosome. Modulates RNA-binding and helicase activities of the degradosome.</text>
</comment>
<comment type="subunit">
    <text evidence="1">Homotrimer. Binds to both RNA-binding sites in the C-terminal region of Rne and to RhlB.</text>
</comment>
<comment type="subcellular location">
    <subcellularLocation>
        <location evidence="1">Cytoplasm</location>
    </subcellularLocation>
</comment>
<comment type="similarity">
    <text evidence="1">Belongs to the RraA family.</text>
</comment>
<reference key="1">
    <citation type="journal article" date="2000" name="Nature">
        <title>DNA sequence of both chromosomes of the cholera pathogen Vibrio cholerae.</title>
        <authorList>
            <person name="Heidelberg J.F."/>
            <person name="Eisen J.A."/>
            <person name="Nelson W.C."/>
            <person name="Clayton R.A."/>
            <person name="Gwinn M.L."/>
            <person name="Dodson R.J."/>
            <person name="Haft D.H."/>
            <person name="Hickey E.K."/>
            <person name="Peterson J.D."/>
            <person name="Umayam L.A."/>
            <person name="Gill S.R."/>
            <person name="Nelson K.E."/>
            <person name="Read T.D."/>
            <person name="Tettelin H."/>
            <person name="Richardson D.L."/>
            <person name="Ermolaeva M.D."/>
            <person name="Vamathevan J.J."/>
            <person name="Bass S."/>
            <person name="Qin H."/>
            <person name="Dragoi I."/>
            <person name="Sellers P."/>
            <person name="McDonald L.A."/>
            <person name="Utterback T.R."/>
            <person name="Fleischmann R.D."/>
            <person name="Nierman W.C."/>
            <person name="White O."/>
            <person name="Salzberg S.L."/>
            <person name="Smith H.O."/>
            <person name="Colwell R.R."/>
            <person name="Mekalanos J.J."/>
            <person name="Venter J.C."/>
            <person name="Fraser C.M."/>
        </authorList>
    </citation>
    <scope>NUCLEOTIDE SEQUENCE [LARGE SCALE GENOMIC DNA]</scope>
    <source>
        <strain>ATCC 39315 / El Tor Inaba N16961</strain>
    </source>
</reference>
<organism>
    <name type="scientific">Vibrio cholerae serotype O1 (strain ATCC 39315 / El Tor Inaba N16961)</name>
    <dbReference type="NCBI Taxonomy" id="243277"/>
    <lineage>
        <taxon>Bacteria</taxon>
        <taxon>Pseudomonadati</taxon>
        <taxon>Pseudomonadota</taxon>
        <taxon>Gammaproteobacteria</taxon>
        <taxon>Vibrionales</taxon>
        <taxon>Vibrionaceae</taxon>
        <taxon>Vibrio</taxon>
    </lineage>
</organism>
<gene>
    <name evidence="1" type="primary">rraA</name>
    <name type="ordered locus">VC_2672</name>
</gene>